<sequence>MSRIAVMGSGAWGTAIALHLARQSEHELLLWSHSARVAESIRAFGENRDFLPGYPVPPALAVTVTADAEAALEFAEIIISVMPSHHVRHSYEQIFAPYLTPSHRILSATKGLEDATYLRMSQVISDVLLRRGLDLPLAVLGGPSFAQEVAAGSPTAVTVASKDAAFAGELQQVFSNGTLRLYTNDDVCGVEMGGALKNIIAIASGVVTGLGLGHNSTAAIITRGIAEMTRLAVACGGRRETLAGLAGLGDLVLTCTGSLSRNRTVGVELGKGRGLDDILAGLGGKVAEGVRTTAAALGLAASLGVEMPIAQQVHTVLQGQASPLQAMQYLMSRPGRDE</sequence>
<evidence type="ECO:0000255" key="1">
    <source>
        <dbReference type="HAMAP-Rule" id="MF_00394"/>
    </source>
</evidence>
<comment type="function">
    <text evidence="1">Catalyzes the reduction of the glycolytic intermediate dihydroxyacetone phosphate (DHAP) to sn-glycerol 3-phosphate (G3P), the key precursor for phospholipid synthesis.</text>
</comment>
<comment type="catalytic activity">
    <reaction evidence="1">
        <text>sn-glycerol 3-phosphate + NAD(+) = dihydroxyacetone phosphate + NADH + H(+)</text>
        <dbReference type="Rhea" id="RHEA:11092"/>
        <dbReference type="ChEBI" id="CHEBI:15378"/>
        <dbReference type="ChEBI" id="CHEBI:57540"/>
        <dbReference type="ChEBI" id="CHEBI:57597"/>
        <dbReference type="ChEBI" id="CHEBI:57642"/>
        <dbReference type="ChEBI" id="CHEBI:57945"/>
        <dbReference type="EC" id="1.1.1.94"/>
    </reaction>
    <physiologicalReaction direction="right-to-left" evidence="1">
        <dbReference type="Rhea" id="RHEA:11094"/>
    </physiologicalReaction>
</comment>
<comment type="catalytic activity">
    <reaction evidence="1">
        <text>sn-glycerol 3-phosphate + NADP(+) = dihydroxyacetone phosphate + NADPH + H(+)</text>
        <dbReference type="Rhea" id="RHEA:11096"/>
        <dbReference type="ChEBI" id="CHEBI:15378"/>
        <dbReference type="ChEBI" id="CHEBI:57597"/>
        <dbReference type="ChEBI" id="CHEBI:57642"/>
        <dbReference type="ChEBI" id="CHEBI:57783"/>
        <dbReference type="ChEBI" id="CHEBI:58349"/>
        <dbReference type="EC" id="1.1.1.94"/>
    </reaction>
    <physiologicalReaction direction="right-to-left" evidence="1">
        <dbReference type="Rhea" id="RHEA:11098"/>
    </physiologicalReaction>
</comment>
<comment type="pathway">
    <text evidence="1">Membrane lipid metabolism; glycerophospholipid metabolism.</text>
</comment>
<comment type="subcellular location">
    <subcellularLocation>
        <location evidence="1">Cytoplasm</location>
    </subcellularLocation>
</comment>
<comment type="similarity">
    <text evidence="1">Belongs to the NAD-dependent glycerol-3-phosphate dehydrogenase family.</text>
</comment>
<feature type="chain" id="PRO_1000190116" description="Glycerol-3-phosphate dehydrogenase [NAD(P)+]">
    <location>
        <begin position="1"/>
        <end position="338"/>
    </location>
</feature>
<feature type="active site" description="Proton acceptor" evidence="1">
    <location>
        <position position="197"/>
    </location>
</feature>
<feature type="binding site" evidence="1">
    <location>
        <position position="12"/>
    </location>
    <ligand>
        <name>NADPH</name>
        <dbReference type="ChEBI" id="CHEBI:57783"/>
    </ligand>
</feature>
<feature type="binding site" evidence="1">
    <location>
        <position position="33"/>
    </location>
    <ligand>
        <name>NADPH</name>
        <dbReference type="ChEBI" id="CHEBI:57783"/>
    </ligand>
</feature>
<feature type="binding site" evidence="1">
    <location>
        <position position="110"/>
    </location>
    <ligand>
        <name>NADPH</name>
        <dbReference type="ChEBI" id="CHEBI:57783"/>
    </ligand>
</feature>
<feature type="binding site" evidence="1">
    <location>
        <position position="110"/>
    </location>
    <ligand>
        <name>sn-glycerol 3-phosphate</name>
        <dbReference type="ChEBI" id="CHEBI:57597"/>
    </ligand>
</feature>
<feature type="binding site" evidence="1">
    <location>
        <position position="142"/>
    </location>
    <ligand>
        <name>sn-glycerol 3-phosphate</name>
        <dbReference type="ChEBI" id="CHEBI:57597"/>
    </ligand>
</feature>
<feature type="binding site" evidence="1">
    <location>
        <position position="144"/>
    </location>
    <ligand>
        <name>sn-glycerol 3-phosphate</name>
        <dbReference type="ChEBI" id="CHEBI:57597"/>
    </ligand>
</feature>
<feature type="binding site" evidence="1">
    <location>
        <position position="146"/>
    </location>
    <ligand>
        <name>NADPH</name>
        <dbReference type="ChEBI" id="CHEBI:57783"/>
    </ligand>
</feature>
<feature type="binding site" evidence="1">
    <location>
        <position position="197"/>
    </location>
    <ligand>
        <name>sn-glycerol 3-phosphate</name>
        <dbReference type="ChEBI" id="CHEBI:57597"/>
    </ligand>
</feature>
<feature type="binding site" evidence="1">
    <location>
        <position position="250"/>
    </location>
    <ligand>
        <name>sn-glycerol 3-phosphate</name>
        <dbReference type="ChEBI" id="CHEBI:57597"/>
    </ligand>
</feature>
<feature type="binding site" evidence="1">
    <location>
        <position position="260"/>
    </location>
    <ligand>
        <name>sn-glycerol 3-phosphate</name>
        <dbReference type="ChEBI" id="CHEBI:57597"/>
    </ligand>
</feature>
<feature type="binding site" evidence="1">
    <location>
        <position position="261"/>
    </location>
    <ligand>
        <name>NADPH</name>
        <dbReference type="ChEBI" id="CHEBI:57783"/>
    </ligand>
</feature>
<feature type="binding site" evidence="1">
    <location>
        <position position="261"/>
    </location>
    <ligand>
        <name>sn-glycerol 3-phosphate</name>
        <dbReference type="ChEBI" id="CHEBI:57597"/>
    </ligand>
</feature>
<feature type="binding site" evidence="1">
    <location>
        <position position="262"/>
    </location>
    <ligand>
        <name>sn-glycerol 3-phosphate</name>
        <dbReference type="ChEBI" id="CHEBI:57597"/>
    </ligand>
</feature>
<feature type="binding site" evidence="1">
    <location>
        <position position="286"/>
    </location>
    <ligand>
        <name>NADPH</name>
        <dbReference type="ChEBI" id="CHEBI:57783"/>
    </ligand>
</feature>
<feature type="binding site" evidence="1">
    <location>
        <position position="288"/>
    </location>
    <ligand>
        <name>NADPH</name>
        <dbReference type="ChEBI" id="CHEBI:57783"/>
    </ligand>
</feature>
<dbReference type="EC" id="1.1.1.94" evidence="1"/>
<dbReference type="EMBL" id="CP001472">
    <property type="protein sequence ID" value="ACO34644.1"/>
    <property type="molecule type" value="Genomic_DNA"/>
</dbReference>
<dbReference type="RefSeq" id="WP_015898440.1">
    <property type="nucleotide sequence ID" value="NC_012483.1"/>
</dbReference>
<dbReference type="SMR" id="C1F6U2"/>
<dbReference type="FunCoup" id="C1F6U2">
    <property type="interactions" value="471"/>
</dbReference>
<dbReference type="STRING" id="240015.ACP_3411"/>
<dbReference type="KEGG" id="aca:ACP_3411"/>
<dbReference type="eggNOG" id="COG0240">
    <property type="taxonomic scope" value="Bacteria"/>
</dbReference>
<dbReference type="HOGENOM" id="CLU_033449_0_2_0"/>
<dbReference type="InParanoid" id="C1F6U2"/>
<dbReference type="OrthoDB" id="9812273at2"/>
<dbReference type="UniPathway" id="UPA00940"/>
<dbReference type="Proteomes" id="UP000002207">
    <property type="component" value="Chromosome"/>
</dbReference>
<dbReference type="GO" id="GO:0005829">
    <property type="term" value="C:cytosol"/>
    <property type="evidence" value="ECO:0007669"/>
    <property type="project" value="TreeGrafter"/>
</dbReference>
<dbReference type="GO" id="GO:0047952">
    <property type="term" value="F:glycerol-3-phosphate dehydrogenase [NAD(P)+] activity"/>
    <property type="evidence" value="ECO:0007669"/>
    <property type="project" value="UniProtKB-UniRule"/>
</dbReference>
<dbReference type="GO" id="GO:0051287">
    <property type="term" value="F:NAD binding"/>
    <property type="evidence" value="ECO:0007669"/>
    <property type="project" value="InterPro"/>
</dbReference>
<dbReference type="GO" id="GO:0005975">
    <property type="term" value="P:carbohydrate metabolic process"/>
    <property type="evidence" value="ECO:0007669"/>
    <property type="project" value="InterPro"/>
</dbReference>
<dbReference type="GO" id="GO:0046167">
    <property type="term" value="P:glycerol-3-phosphate biosynthetic process"/>
    <property type="evidence" value="ECO:0007669"/>
    <property type="project" value="UniProtKB-UniRule"/>
</dbReference>
<dbReference type="GO" id="GO:0046168">
    <property type="term" value="P:glycerol-3-phosphate catabolic process"/>
    <property type="evidence" value="ECO:0007669"/>
    <property type="project" value="InterPro"/>
</dbReference>
<dbReference type="GO" id="GO:0006650">
    <property type="term" value="P:glycerophospholipid metabolic process"/>
    <property type="evidence" value="ECO:0007669"/>
    <property type="project" value="UniProtKB-UniRule"/>
</dbReference>
<dbReference type="GO" id="GO:0008654">
    <property type="term" value="P:phospholipid biosynthetic process"/>
    <property type="evidence" value="ECO:0007669"/>
    <property type="project" value="UniProtKB-KW"/>
</dbReference>
<dbReference type="FunFam" id="1.10.1040.10:FF:000001">
    <property type="entry name" value="Glycerol-3-phosphate dehydrogenase [NAD(P)+]"/>
    <property type="match status" value="1"/>
</dbReference>
<dbReference type="FunFam" id="3.40.50.720:FF:000019">
    <property type="entry name" value="Glycerol-3-phosphate dehydrogenase [NAD(P)+]"/>
    <property type="match status" value="1"/>
</dbReference>
<dbReference type="Gene3D" id="1.10.1040.10">
    <property type="entry name" value="N-(1-d-carboxylethyl)-l-norvaline Dehydrogenase, domain 2"/>
    <property type="match status" value="1"/>
</dbReference>
<dbReference type="Gene3D" id="3.40.50.720">
    <property type="entry name" value="NAD(P)-binding Rossmann-like Domain"/>
    <property type="match status" value="1"/>
</dbReference>
<dbReference type="HAMAP" id="MF_00394">
    <property type="entry name" value="NAD_Glyc3P_dehydrog"/>
    <property type="match status" value="1"/>
</dbReference>
<dbReference type="InterPro" id="IPR008927">
    <property type="entry name" value="6-PGluconate_DH-like_C_sf"/>
</dbReference>
<dbReference type="InterPro" id="IPR013328">
    <property type="entry name" value="6PGD_dom2"/>
</dbReference>
<dbReference type="InterPro" id="IPR006168">
    <property type="entry name" value="G3P_DH_NAD-dep"/>
</dbReference>
<dbReference type="InterPro" id="IPR006109">
    <property type="entry name" value="G3P_DH_NAD-dep_C"/>
</dbReference>
<dbReference type="InterPro" id="IPR011128">
    <property type="entry name" value="G3P_DH_NAD-dep_N"/>
</dbReference>
<dbReference type="InterPro" id="IPR036291">
    <property type="entry name" value="NAD(P)-bd_dom_sf"/>
</dbReference>
<dbReference type="NCBIfam" id="NF000940">
    <property type="entry name" value="PRK00094.1-2"/>
    <property type="match status" value="1"/>
</dbReference>
<dbReference type="NCBIfam" id="NF000942">
    <property type="entry name" value="PRK00094.1-4"/>
    <property type="match status" value="1"/>
</dbReference>
<dbReference type="PANTHER" id="PTHR11728">
    <property type="entry name" value="GLYCEROL-3-PHOSPHATE DEHYDROGENASE"/>
    <property type="match status" value="1"/>
</dbReference>
<dbReference type="PANTHER" id="PTHR11728:SF1">
    <property type="entry name" value="GLYCEROL-3-PHOSPHATE DEHYDROGENASE [NAD(+)] 2, CHLOROPLASTIC"/>
    <property type="match status" value="1"/>
</dbReference>
<dbReference type="Pfam" id="PF07479">
    <property type="entry name" value="NAD_Gly3P_dh_C"/>
    <property type="match status" value="1"/>
</dbReference>
<dbReference type="Pfam" id="PF01210">
    <property type="entry name" value="NAD_Gly3P_dh_N"/>
    <property type="match status" value="1"/>
</dbReference>
<dbReference type="PIRSF" id="PIRSF000114">
    <property type="entry name" value="Glycerol-3-P_dh"/>
    <property type="match status" value="1"/>
</dbReference>
<dbReference type="PRINTS" id="PR00077">
    <property type="entry name" value="GPDHDRGNASE"/>
</dbReference>
<dbReference type="SUPFAM" id="SSF48179">
    <property type="entry name" value="6-phosphogluconate dehydrogenase C-terminal domain-like"/>
    <property type="match status" value="1"/>
</dbReference>
<dbReference type="SUPFAM" id="SSF51735">
    <property type="entry name" value="NAD(P)-binding Rossmann-fold domains"/>
    <property type="match status" value="1"/>
</dbReference>
<dbReference type="PROSITE" id="PS00957">
    <property type="entry name" value="NAD_G3PDH"/>
    <property type="match status" value="1"/>
</dbReference>
<protein>
    <recommendedName>
        <fullName evidence="1">Glycerol-3-phosphate dehydrogenase [NAD(P)+]</fullName>
        <ecNumber evidence="1">1.1.1.94</ecNumber>
    </recommendedName>
    <alternativeName>
        <fullName evidence="1">NAD(P)(+)-dependent glycerol-3-phosphate dehydrogenase</fullName>
    </alternativeName>
    <alternativeName>
        <fullName evidence="1">NAD(P)H-dependent dihydroxyacetone-phosphate reductase</fullName>
    </alternativeName>
</protein>
<gene>
    <name evidence="1" type="primary">gpsA</name>
    <name type="ordered locus">ACP_3411</name>
</gene>
<keyword id="KW-0963">Cytoplasm</keyword>
<keyword id="KW-0444">Lipid biosynthesis</keyword>
<keyword id="KW-0443">Lipid metabolism</keyword>
<keyword id="KW-0520">NAD</keyword>
<keyword id="KW-0521">NADP</keyword>
<keyword id="KW-0547">Nucleotide-binding</keyword>
<keyword id="KW-0560">Oxidoreductase</keyword>
<keyword id="KW-0594">Phospholipid biosynthesis</keyword>
<keyword id="KW-1208">Phospholipid metabolism</keyword>
<keyword id="KW-1185">Reference proteome</keyword>
<accession>C1F6U2</accession>
<organism>
    <name type="scientific">Acidobacterium capsulatum (strain ATCC 51196 / DSM 11244 / BCRC 80197 / JCM 7670 / NBRC 15755 / NCIMB 13165 / 161)</name>
    <dbReference type="NCBI Taxonomy" id="240015"/>
    <lineage>
        <taxon>Bacteria</taxon>
        <taxon>Pseudomonadati</taxon>
        <taxon>Acidobacteriota</taxon>
        <taxon>Terriglobia</taxon>
        <taxon>Terriglobales</taxon>
        <taxon>Acidobacteriaceae</taxon>
        <taxon>Acidobacterium</taxon>
    </lineage>
</organism>
<reference key="1">
    <citation type="journal article" date="2009" name="Appl. Environ. Microbiol.">
        <title>Three genomes from the phylum Acidobacteria provide insight into the lifestyles of these microorganisms in soils.</title>
        <authorList>
            <person name="Ward N.L."/>
            <person name="Challacombe J.F."/>
            <person name="Janssen P.H."/>
            <person name="Henrissat B."/>
            <person name="Coutinho P.M."/>
            <person name="Wu M."/>
            <person name="Xie G."/>
            <person name="Haft D.H."/>
            <person name="Sait M."/>
            <person name="Badger J."/>
            <person name="Barabote R.D."/>
            <person name="Bradley B."/>
            <person name="Brettin T.S."/>
            <person name="Brinkac L.M."/>
            <person name="Bruce D."/>
            <person name="Creasy T."/>
            <person name="Daugherty S.C."/>
            <person name="Davidsen T.M."/>
            <person name="DeBoy R.T."/>
            <person name="Detter J.C."/>
            <person name="Dodson R.J."/>
            <person name="Durkin A.S."/>
            <person name="Ganapathy A."/>
            <person name="Gwinn-Giglio M."/>
            <person name="Han C.S."/>
            <person name="Khouri H."/>
            <person name="Kiss H."/>
            <person name="Kothari S.P."/>
            <person name="Madupu R."/>
            <person name="Nelson K.E."/>
            <person name="Nelson W.C."/>
            <person name="Paulsen I."/>
            <person name="Penn K."/>
            <person name="Ren Q."/>
            <person name="Rosovitz M.J."/>
            <person name="Selengut J.D."/>
            <person name="Shrivastava S."/>
            <person name="Sullivan S.A."/>
            <person name="Tapia R."/>
            <person name="Thompson L.S."/>
            <person name="Watkins K.L."/>
            <person name="Yang Q."/>
            <person name="Yu C."/>
            <person name="Zafar N."/>
            <person name="Zhou L."/>
            <person name="Kuske C.R."/>
        </authorList>
    </citation>
    <scope>NUCLEOTIDE SEQUENCE [LARGE SCALE GENOMIC DNA]</scope>
    <source>
        <strain>ATCC 51196 / DSM 11244 / BCRC 80197 / JCM 7670 / NBRC 15755 / NCIMB 13165 / 161</strain>
    </source>
</reference>
<name>GPDA_ACIC5</name>
<proteinExistence type="inferred from homology"/>